<organism>
    <name type="scientific">Oryza sativa subsp. japonica</name>
    <name type="common">Rice</name>
    <dbReference type="NCBI Taxonomy" id="39947"/>
    <lineage>
        <taxon>Eukaryota</taxon>
        <taxon>Viridiplantae</taxon>
        <taxon>Streptophyta</taxon>
        <taxon>Embryophyta</taxon>
        <taxon>Tracheophyta</taxon>
        <taxon>Spermatophyta</taxon>
        <taxon>Magnoliopsida</taxon>
        <taxon>Liliopsida</taxon>
        <taxon>Poales</taxon>
        <taxon>Poaceae</taxon>
        <taxon>BOP clade</taxon>
        <taxon>Oryzoideae</taxon>
        <taxon>Oryzeae</taxon>
        <taxon>Oryzinae</taxon>
        <taxon>Oryza</taxon>
        <taxon>Oryza sativa</taxon>
    </lineage>
</organism>
<comment type="function">
    <text evidence="1">mRNA-capping methyltransferase that methylates the N7 position of the added guanosine to the 5'-cap structure of mRNAs. Binds RNA containing 5'-terminal GpppC (By similarity).</text>
</comment>
<comment type="catalytic activity">
    <reaction evidence="2">
        <text>a 5'-end (5'-triphosphoguanosine)-ribonucleoside in mRNA + S-adenosyl-L-methionine = a 5'-end (N(7)-methyl 5'-triphosphoguanosine)-ribonucleoside in mRNA + S-adenosyl-L-homocysteine</text>
        <dbReference type="Rhea" id="RHEA:67008"/>
        <dbReference type="Rhea" id="RHEA-COMP:17166"/>
        <dbReference type="Rhea" id="RHEA-COMP:17167"/>
        <dbReference type="ChEBI" id="CHEBI:57856"/>
        <dbReference type="ChEBI" id="CHEBI:59789"/>
        <dbReference type="ChEBI" id="CHEBI:156461"/>
        <dbReference type="ChEBI" id="CHEBI:167617"/>
        <dbReference type="EC" id="2.1.1.56"/>
    </reaction>
</comment>
<comment type="subcellular location">
    <subcellularLocation>
        <location evidence="1">Nucleus</location>
    </subcellularLocation>
</comment>
<comment type="similarity">
    <text evidence="2">Belongs to the class I-like SAM-binding methyltransferase superfamily. mRNA cap 0 methyltransferase family.</text>
</comment>
<keyword id="KW-0489">Methyltransferase</keyword>
<keyword id="KW-0506">mRNA capping</keyword>
<keyword id="KW-0507">mRNA processing</keyword>
<keyword id="KW-0539">Nucleus</keyword>
<keyword id="KW-1185">Reference proteome</keyword>
<keyword id="KW-0694">RNA-binding</keyword>
<keyword id="KW-0949">S-adenosyl-L-methionine</keyword>
<keyword id="KW-0808">Transferase</keyword>
<protein>
    <recommendedName>
        <fullName>mRNA cap guanine-N(7) methyltransferase 1</fullName>
        <ecNumber>2.1.1.56</ecNumber>
    </recommendedName>
    <alternativeName>
        <fullName>mRNA (guanine-N(7))-methyltransferase 1</fullName>
    </alternativeName>
    <alternativeName>
        <fullName>mRNA cap methyltransferase 1</fullName>
    </alternativeName>
</protein>
<proteinExistence type="evidence at transcript level"/>
<accession>Q6Z9U7</accession>
<accession>B9FZD4</accession>
<accession>Q0J7L5</accession>
<reference key="1">
    <citation type="journal article" date="2005" name="Nature">
        <title>The map-based sequence of the rice genome.</title>
        <authorList>
            <consortium name="International rice genome sequencing project (IRGSP)"/>
        </authorList>
    </citation>
    <scope>NUCLEOTIDE SEQUENCE [LARGE SCALE GENOMIC DNA]</scope>
    <source>
        <strain>cv. Nipponbare</strain>
    </source>
</reference>
<reference key="2">
    <citation type="journal article" date="2008" name="Nucleic Acids Res.">
        <title>The rice annotation project database (RAP-DB): 2008 update.</title>
        <authorList>
            <consortium name="The rice annotation project (RAP)"/>
        </authorList>
    </citation>
    <scope>GENOME REANNOTATION</scope>
    <source>
        <strain>cv. Nipponbare</strain>
    </source>
</reference>
<reference key="3">
    <citation type="journal article" date="2013" name="Rice">
        <title>Improvement of the Oryza sativa Nipponbare reference genome using next generation sequence and optical map data.</title>
        <authorList>
            <person name="Kawahara Y."/>
            <person name="de la Bastide M."/>
            <person name="Hamilton J.P."/>
            <person name="Kanamori H."/>
            <person name="McCombie W.R."/>
            <person name="Ouyang S."/>
            <person name="Schwartz D.C."/>
            <person name="Tanaka T."/>
            <person name="Wu J."/>
            <person name="Zhou S."/>
            <person name="Childs K.L."/>
            <person name="Davidson R.M."/>
            <person name="Lin H."/>
            <person name="Quesada-Ocampo L."/>
            <person name="Vaillancourt B."/>
            <person name="Sakai H."/>
            <person name="Lee S.S."/>
            <person name="Kim J."/>
            <person name="Numa H."/>
            <person name="Itoh T."/>
            <person name="Buell C.R."/>
            <person name="Matsumoto T."/>
        </authorList>
    </citation>
    <scope>GENOME REANNOTATION</scope>
    <source>
        <strain>cv. Nipponbare</strain>
    </source>
</reference>
<reference key="4">
    <citation type="journal article" date="2005" name="PLoS Biol.">
        <title>The genomes of Oryza sativa: a history of duplications.</title>
        <authorList>
            <person name="Yu J."/>
            <person name="Wang J."/>
            <person name="Lin W."/>
            <person name="Li S."/>
            <person name="Li H."/>
            <person name="Zhou J."/>
            <person name="Ni P."/>
            <person name="Dong W."/>
            <person name="Hu S."/>
            <person name="Zeng C."/>
            <person name="Zhang J."/>
            <person name="Zhang Y."/>
            <person name="Li R."/>
            <person name="Xu Z."/>
            <person name="Li S."/>
            <person name="Li X."/>
            <person name="Zheng H."/>
            <person name="Cong L."/>
            <person name="Lin L."/>
            <person name="Yin J."/>
            <person name="Geng J."/>
            <person name="Li G."/>
            <person name="Shi J."/>
            <person name="Liu J."/>
            <person name="Lv H."/>
            <person name="Li J."/>
            <person name="Wang J."/>
            <person name="Deng Y."/>
            <person name="Ran L."/>
            <person name="Shi X."/>
            <person name="Wang X."/>
            <person name="Wu Q."/>
            <person name="Li C."/>
            <person name="Ren X."/>
            <person name="Wang J."/>
            <person name="Wang X."/>
            <person name="Li D."/>
            <person name="Liu D."/>
            <person name="Zhang X."/>
            <person name="Ji Z."/>
            <person name="Zhao W."/>
            <person name="Sun Y."/>
            <person name="Zhang Z."/>
            <person name="Bao J."/>
            <person name="Han Y."/>
            <person name="Dong L."/>
            <person name="Ji J."/>
            <person name="Chen P."/>
            <person name="Wu S."/>
            <person name="Liu J."/>
            <person name="Xiao Y."/>
            <person name="Bu D."/>
            <person name="Tan J."/>
            <person name="Yang L."/>
            <person name="Ye C."/>
            <person name="Zhang J."/>
            <person name="Xu J."/>
            <person name="Zhou Y."/>
            <person name="Yu Y."/>
            <person name="Zhang B."/>
            <person name="Zhuang S."/>
            <person name="Wei H."/>
            <person name="Liu B."/>
            <person name="Lei M."/>
            <person name="Yu H."/>
            <person name="Li Y."/>
            <person name="Xu H."/>
            <person name="Wei S."/>
            <person name="He X."/>
            <person name="Fang L."/>
            <person name="Zhang Z."/>
            <person name="Zhang Y."/>
            <person name="Huang X."/>
            <person name="Su Z."/>
            <person name="Tong W."/>
            <person name="Li J."/>
            <person name="Tong Z."/>
            <person name="Li S."/>
            <person name="Ye J."/>
            <person name="Wang L."/>
            <person name="Fang L."/>
            <person name="Lei T."/>
            <person name="Chen C.-S."/>
            <person name="Chen H.-C."/>
            <person name="Xu Z."/>
            <person name="Li H."/>
            <person name="Huang H."/>
            <person name="Zhang F."/>
            <person name="Xu H."/>
            <person name="Li N."/>
            <person name="Zhao C."/>
            <person name="Li S."/>
            <person name="Dong L."/>
            <person name="Huang Y."/>
            <person name="Li L."/>
            <person name="Xi Y."/>
            <person name="Qi Q."/>
            <person name="Li W."/>
            <person name="Zhang B."/>
            <person name="Hu W."/>
            <person name="Zhang Y."/>
            <person name="Tian X."/>
            <person name="Jiao Y."/>
            <person name="Liang X."/>
            <person name="Jin J."/>
            <person name="Gao L."/>
            <person name="Zheng W."/>
            <person name="Hao B."/>
            <person name="Liu S.-M."/>
            <person name="Wang W."/>
            <person name="Yuan L."/>
            <person name="Cao M."/>
            <person name="McDermott J."/>
            <person name="Samudrala R."/>
            <person name="Wang J."/>
            <person name="Wong G.K.-S."/>
            <person name="Yang H."/>
        </authorList>
    </citation>
    <scope>NUCLEOTIDE SEQUENCE [LARGE SCALE GENOMIC DNA]</scope>
    <source>
        <strain>cv. Nipponbare</strain>
    </source>
</reference>
<reference key="5">
    <citation type="journal article" date="2003" name="Science">
        <title>Collection, mapping, and annotation of over 28,000 cDNA clones from japonica rice.</title>
        <authorList>
            <consortium name="The rice full-length cDNA consortium"/>
        </authorList>
    </citation>
    <scope>NUCLEOTIDE SEQUENCE [LARGE SCALE MRNA]</scope>
    <source>
        <strain>cv. Nipponbare</strain>
    </source>
</reference>
<name>MCES1_ORYSJ</name>
<dbReference type="EC" id="2.1.1.56"/>
<dbReference type="EMBL" id="AP004692">
    <property type="protein sequence ID" value="BAD17036.1"/>
    <property type="molecule type" value="Genomic_DNA"/>
</dbReference>
<dbReference type="EMBL" id="AP008214">
    <property type="protein sequence ID" value="BAF23050.1"/>
    <property type="molecule type" value="Genomic_DNA"/>
</dbReference>
<dbReference type="EMBL" id="AP014964">
    <property type="protein sequence ID" value="BAT04104.1"/>
    <property type="molecule type" value="Genomic_DNA"/>
</dbReference>
<dbReference type="EMBL" id="CM000145">
    <property type="protein sequence ID" value="EEE68151.1"/>
    <property type="molecule type" value="Genomic_DNA"/>
</dbReference>
<dbReference type="EMBL" id="AK063927">
    <property type="status" value="NOT_ANNOTATED_CDS"/>
    <property type="molecule type" value="mRNA"/>
</dbReference>
<dbReference type="RefSeq" id="XP_015648407.1">
    <property type="nucleotide sequence ID" value="XM_015792921.1"/>
</dbReference>
<dbReference type="SMR" id="Q6Z9U7"/>
<dbReference type="FunCoup" id="Q6Z9U7">
    <property type="interactions" value="3536"/>
</dbReference>
<dbReference type="STRING" id="39947.Q6Z9U7"/>
<dbReference type="PaxDb" id="39947-Q6Z9U7"/>
<dbReference type="EnsemblPlants" id="Os08t0180000-01">
    <property type="protein sequence ID" value="Os08t0180000-01"/>
    <property type="gene ID" value="Os08g0180000"/>
</dbReference>
<dbReference type="EnsemblPlants" id="Os08t0180000-02">
    <property type="protein sequence ID" value="Os08t0180000-02"/>
    <property type="gene ID" value="Os08g0180000"/>
</dbReference>
<dbReference type="Gramene" id="Os08t0180000-01">
    <property type="protein sequence ID" value="Os08t0180000-01"/>
    <property type="gene ID" value="Os08g0180000"/>
</dbReference>
<dbReference type="Gramene" id="Os08t0180000-02">
    <property type="protein sequence ID" value="Os08t0180000-02"/>
    <property type="gene ID" value="Os08g0180000"/>
</dbReference>
<dbReference type="KEGG" id="dosa:Os08g0180000"/>
<dbReference type="eggNOG" id="KOG1975">
    <property type="taxonomic scope" value="Eukaryota"/>
</dbReference>
<dbReference type="HOGENOM" id="CLU_020346_1_0_1"/>
<dbReference type="InParanoid" id="Q6Z9U7"/>
<dbReference type="OMA" id="LITGDCF"/>
<dbReference type="OrthoDB" id="10248867at2759"/>
<dbReference type="Proteomes" id="UP000000763">
    <property type="component" value="Chromosome 8"/>
</dbReference>
<dbReference type="Proteomes" id="UP000007752">
    <property type="component" value="Chromosome 8"/>
</dbReference>
<dbReference type="Proteomes" id="UP000059680">
    <property type="component" value="Chromosome 8"/>
</dbReference>
<dbReference type="GO" id="GO:0005634">
    <property type="term" value="C:nucleus"/>
    <property type="evidence" value="ECO:0000318"/>
    <property type="project" value="GO_Central"/>
</dbReference>
<dbReference type="GO" id="GO:0004482">
    <property type="term" value="F:mRNA 5'-cap (guanine-N7-)-methyltransferase activity"/>
    <property type="evidence" value="ECO:0000318"/>
    <property type="project" value="GO_Central"/>
</dbReference>
<dbReference type="GO" id="GO:0003723">
    <property type="term" value="F:RNA binding"/>
    <property type="evidence" value="ECO:0007669"/>
    <property type="project" value="UniProtKB-KW"/>
</dbReference>
<dbReference type="GO" id="GO:0006370">
    <property type="term" value="P:7-methylguanosine mRNA capping"/>
    <property type="evidence" value="ECO:0000318"/>
    <property type="project" value="GO_Central"/>
</dbReference>
<dbReference type="CDD" id="cd02440">
    <property type="entry name" value="AdoMet_MTases"/>
    <property type="match status" value="1"/>
</dbReference>
<dbReference type="FunFam" id="3.40.50.150:FF:000127">
    <property type="entry name" value="mRNA cap guanine-N7 methyltransferase"/>
    <property type="match status" value="1"/>
</dbReference>
<dbReference type="Gene3D" id="3.40.50.150">
    <property type="entry name" value="Vaccinia Virus protein VP39"/>
    <property type="match status" value="1"/>
</dbReference>
<dbReference type="InterPro" id="IPR004971">
    <property type="entry name" value="mRNA_G-N7_MeTrfase_dom"/>
</dbReference>
<dbReference type="InterPro" id="IPR016899">
    <property type="entry name" value="mRNA_G-N7_MeTrfase_euk"/>
</dbReference>
<dbReference type="InterPro" id="IPR039753">
    <property type="entry name" value="RG7MT1"/>
</dbReference>
<dbReference type="InterPro" id="IPR029063">
    <property type="entry name" value="SAM-dependent_MTases_sf"/>
</dbReference>
<dbReference type="PANTHER" id="PTHR12189:SF2">
    <property type="entry name" value="MRNA CAP GUANINE-N7 METHYLTRANSFERASE"/>
    <property type="match status" value="1"/>
</dbReference>
<dbReference type="PANTHER" id="PTHR12189">
    <property type="entry name" value="MRNA GUANINE-7- METHYLTRANSFERASE"/>
    <property type="match status" value="1"/>
</dbReference>
<dbReference type="Pfam" id="PF03291">
    <property type="entry name" value="mRNA_G-N7_MeTrfase"/>
    <property type="match status" value="1"/>
</dbReference>
<dbReference type="PIRSF" id="PIRSF028762">
    <property type="entry name" value="ABD1"/>
    <property type="match status" value="1"/>
</dbReference>
<dbReference type="SUPFAM" id="SSF53335">
    <property type="entry name" value="S-adenosyl-L-methionine-dependent methyltransferases"/>
    <property type="match status" value="1"/>
</dbReference>
<dbReference type="PROSITE" id="PS51562">
    <property type="entry name" value="RNA_CAP0_MT"/>
    <property type="match status" value="1"/>
</dbReference>
<gene>
    <name type="ordered locus">Os08g0180000</name>
    <name type="ordered locus">LOC_Os08g08200</name>
    <name evidence="4" type="ORF">OsJ_26261</name>
    <name type="ORF">P0455A11.11</name>
</gene>
<feature type="chain" id="PRO_0000248332" description="mRNA cap guanine-N(7) methyltransferase 1">
    <location>
        <begin position="1"/>
        <end position="369"/>
    </location>
</feature>
<feature type="domain" description="mRNA cap 0 methyltransferase" evidence="2">
    <location>
        <begin position="61"/>
        <end position="340"/>
    </location>
</feature>
<feature type="region of interest" description="Disordered" evidence="3">
    <location>
        <begin position="1"/>
        <end position="55"/>
    </location>
</feature>
<feature type="compositionally biased region" description="Gly residues" evidence="3">
    <location>
        <begin position="22"/>
        <end position="32"/>
    </location>
</feature>
<feature type="compositionally biased region" description="Basic and acidic residues" evidence="3">
    <location>
        <begin position="33"/>
        <end position="48"/>
    </location>
</feature>
<feature type="binding site" evidence="2">
    <location>
        <begin position="70"/>
        <end position="71"/>
    </location>
    <ligand>
        <name>mRNA</name>
        <dbReference type="ChEBI" id="CHEBI:33699"/>
    </ligand>
    <ligandPart>
        <name>mRNA cap</name>
    </ligandPart>
</feature>
<feature type="binding site" evidence="2">
    <location>
        <position position="74"/>
    </location>
    <ligand>
        <name>S-adenosyl-L-methionine</name>
        <dbReference type="ChEBI" id="CHEBI:59789"/>
    </ligand>
</feature>
<feature type="binding site" evidence="2">
    <location>
        <position position="92"/>
    </location>
    <ligand>
        <name>S-adenosyl-L-methionine</name>
        <dbReference type="ChEBI" id="CHEBI:59789"/>
    </ligand>
</feature>
<feature type="binding site" evidence="2">
    <location>
        <position position="114"/>
    </location>
    <ligand>
        <name>S-adenosyl-L-methionine</name>
        <dbReference type="ChEBI" id="CHEBI:59789"/>
    </ligand>
</feature>
<feature type="binding site" evidence="2">
    <location>
        <begin position="149"/>
        <end position="150"/>
    </location>
    <ligand>
        <name>S-adenosyl-L-methionine</name>
        <dbReference type="ChEBI" id="CHEBI:59789"/>
    </ligand>
</feature>
<feature type="binding site" evidence="2">
    <location>
        <begin position="171"/>
        <end position="173"/>
    </location>
    <ligand>
        <name>S-adenosyl-L-methionine</name>
        <dbReference type="ChEBI" id="CHEBI:59789"/>
    </ligand>
</feature>
<feature type="site" description="mRNA cap binding" evidence="2">
    <location>
        <position position="95"/>
    </location>
</feature>
<feature type="site" description="mRNA cap binding" evidence="2">
    <location>
        <position position="101"/>
    </location>
</feature>
<feature type="site" description="mRNA cap binding" evidence="2">
    <location>
        <position position="126"/>
    </location>
</feature>
<feature type="site" description="mRNA cap binding" evidence="2">
    <location>
        <position position="175"/>
    </location>
</feature>
<feature type="site" description="mRNA cap binding" evidence="2">
    <location>
        <position position="263"/>
    </location>
</feature>
<feature type="site" description="mRNA cap binding" evidence="2">
    <location>
        <position position="332"/>
    </location>
</feature>
<evidence type="ECO:0000250" key="1"/>
<evidence type="ECO:0000255" key="2">
    <source>
        <dbReference type="PROSITE-ProRule" id="PRU00895"/>
    </source>
</evidence>
<evidence type="ECO:0000256" key="3">
    <source>
        <dbReference type="SAM" id="MobiDB-lite"/>
    </source>
</evidence>
<evidence type="ECO:0000312" key="4">
    <source>
        <dbReference type="EMBL" id="EEE68151.1"/>
    </source>
</evidence>
<sequence length="369" mass="42040">MNKRPRDEPSSSFASAPKRQYGAGGGGYGGHGYSEERSSARRVADHYSARSNQTLEERENSPIIHLKKLNNWIKSVLIQLYAHPGDCVLDLACGKGGDLIKWDKAKVGYYVGVDIAEGSIKDCMTRYNGDTDQQRRKKFSFPARLICADCYEARLDEHLYEDAPFDICSCQFALHYSWSTEARARQALANVSALLRPGGVFIGTMPDANVIIKRLRETDGMEFGNGVYWISFGEEYAEKKFPASRPFGIKYKFHLEDAVDCPEWVVPFHLFKLLAEEYDLELVLTKNFHEFVHEYLQKPEFAELMRRLGALGDGRQDQSTLSQDEWEVAYLYLAFVLRKRGQPPSQRRANNANRGKMFLTENDIDFLGV</sequence>